<reference key="1">
    <citation type="submission" date="2009-03" db="EMBL/GenBank/DDBJ databases">
        <title>Brucella melitensis ATCC 23457 whole genome shotgun sequencing project.</title>
        <authorList>
            <person name="Setubal J.C."/>
            <person name="Boyle S."/>
            <person name="Crasta O.R."/>
            <person name="Gillespie J.J."/>
            <person name="Kenyon R.W."/>
            <person name="Lu J."/>
            <person name="Mane S."/>
            <person name="Nagrani S."/>
            <person name="Shallom J.M."/>
            <person name="Shallom S."/>
            <person name="Shukla M."/>
            <person name="Snyder E.E."/>
            <person name="Sobral B.W."/>
            <person name="Wattam A.R."/>
            <person name="Will R."/>
            <person name="Williams K."/>
            <person name="Yoo H."/>
            <person name="Munk C."/>
            <person name="Tapia R."/>
            <person name="Han C."/>
            <person name="Detter J.C."/>
            <person name="Bruce D."/>
            <person name="Brettin T.S."/>
        </authorList>
    </citation>
    <scope>NUCLEOTIDE SEQUENCE [LARGE SCALE GENOMIC DNA]</scope>
    <source>
        <strain>ATCC 23457</strain>
    </source>
</reference>
<organism>
    <name type="scientific">Brucella melitensis biotype 2 (strain ATCC 23457)</name>
    <dbReference type="NCBI Taxonomy" id="546272"/>
    <lineage>
        <taxon>Bacteria</taxon>
        <taxon>Pseudomonadati</taxon>
        <taxon>Pseudomonadota</taxon>
        <taxon>Alphaproteobacteria</taxon>
        <taxon>Hyphomicrobiales</taxon>
        <taxon>Brucellaceae</taxon>
        <taxon>Brucella/Ochrobactrum group</taxon>
        <taxon>Brucella</taxon>
    </lineage>
</organism>
<sequence length="162" mass="17526">MATAEIEEIPALLKPGQTVAGLDLGTKTIGLAVSDLGLSFAHPRPVIKRVKFTIDAQVLLKALETDKVGVIVIGLPMNMDGTAGPRVQATRAFVRTMQPLTDLPFVFWDERLSTVAAERALIGMDVSRGKRADRIDSAAAAFILQGALDRLHMMRRNDYDAG</sequence>
<name>YQGF_BRUMB</name>
<dbReference type="EC" id="3.1.-.-" evidence="1"/>
<dbReference type="EMBL" id="CP001489">
    <property type="protein sequence ID" value="ACO02401.1"/>
    <property type="molecule type" value="Genomic_DNA"/>
</dbReference>
<dbReference type="SMR" id="C0RLB8"/>
<dbReference type="KEGG" id="bmi:BMEA_B0572"/>
<dbReference type="HOGENOM" id="CLU_098240_1_1_5"/>
<dbReference type="Proteomes" id="UP000001748">
    <property type="component" value="Chromosome II"/>
</dbReference>
<dbReference type="GO" id="GO:0005829">
    <property type="term" value="C:cytosol"/>
    <property type="evidence" value="ECO:0007669"/>
    <property type="project" value="TreeGrafter"/>
</dbReference>
<dbReference type="GO" id="GO:0004518">
    <property type="term" value="F:nuclease activity"/>
    <property type="evidence" value="ECO:0007669"/>
    <property type="project" value="UniProtKB-KW"/>
</dbReference>
<dbReference type="GO" id="GO:0000967">
    <property type="term" value="P:rRNA 5'-end processing"/>
    <property type="evidence" value="ECO:0007669"/>
    <property type="project" value="UniProtKB-UniRule"/>
</dbReference>
<dbReference type="CDD" id="cd16964">
    <property type="entry name" value="YqgF"/>
    <property type="match status" value="1"/>
</dbReference>
<dbReference type="Gene3D" id="3.30.420.140">
    <property type="entry name" value="YqgF/RNase H-like domain"/>
    <property type="match status" value="1"/>
</dbReference>
<dbReference type="HAMAP" id="MF_00651">
    <property type="entry name" value="Nuclease_YqgF"/>
    <property type="match status" value="1"/>
</dbReference>
<dbReference type="InterPro" id="IPR012337">
    <property type="entry name" value="RNaseH-like_sf"/>
</dbReference>
<dbReference type="InterPro" id="IPR005227">
    <property type="entry name" value="YqgF"/>
</dbReference>
<dbReference type="InterPro" id="IPR006641">
    <property type="entry name" value="YqgF/RNaseH-like_dom"/>
</dbReference>
<dbReference type="InterPro" id="IPR037027">
    <property type="entry name" value="YqgF/RNaseH-like_dom_sf"/>
</dbReference>
<dbReference type="NCBIfam" id="TIGR00250">
    <property type="entry name" value="RNAse_H_YqgF"/>
    <property type="match status" value="1"/>
</dbReference>
<dbReference type="PANTHER" id="PTHR33317">
    <property type="entry name" value="POLYNUCLEOTIDYL TRANSFERASE, RIBONUCLEASE H-LIKE SUPERFAMILY PROTEIN"/>
    <property type="match status" value="1"/>
</dbReference>
<dbReference type="PANTHER" id="PTHR33317:SF4">
    <property type="entry name" value="POLYNUCLEOTIDYL TRANSFERASE, RIBONUCLEASE H-LIKE SUPERFAMILY PROTEIN"/>
    <property type="match status" value="1"/>
</dbReference>
<dbReference type="Pfam" id="PF03652">
    <property type="entry name" value="RuvX"/>
    <property type="match status" value="1"/>
</dbReference>
<dbReference type="SMART" id="SM00732">
    <property type="entry name" value="YqgFc"/>
    <property type="match status" value="1"/>
</dbReference>
<dbReference type="SUPFAM" id="SSF53098">
    <property type="entry name" value="Ribonuclease H-like"/>
    <property type="match status" value="1"/>
</dbReference>
<comment type="function">
    <text evidence="1">Could be a nuclease involved in processing of the 5'-end of pre-16S rRNA.</text>
</comment>
<comment type="subcellular location">
    <subcellularLocation>
        <location evidence="1">Cytoplasm</location>
    </subcellularLocation>
</comment>
<comment type="similarity">
    <text evidence="1">Belongs to the YqgF nuclease family.</text>
</comment>
<proteinExistence type="inferred from homology"/>
<feature type="chain" id="PRO_1000147464" description="Putative pre-16S rRNA nuclease">
    <location>
        <begin position="1"/>
        <end position="162"/>
    </location>
</feature>
<gene>
    <name type="ordered locus">BMEA_B0572</name>
</gene>
<protein>
    <recommendedName>
        <fullName evidence="1">Putative pre-16S rRNA nuclease</fullName>
        <ecNumber evidence="1">3.1.-.-</ecNumber>
    </recommendedName>
</protein>
<keyword id="KW-0963">Cytoplasm</keyword>
<keyword id="KW-0378">Hydrolase</keyword>
<keyword id="KW-0540">Nuclease</keyword>
<keyword id="KW-0690">Ribosome biogenesis</keyword>
<evidence type="ECO:0000255" key="1">
    <source>
        <dbReference type="HAMAP-Rule" id="MF_00651"/>
    </source>
</evidence>
<accession>C0RLB8</accession>